<reference key="1">
    <citation type="journal article" date="2009" name="Stand. Genomic Sci.">
        <title>Complete genome sequence of Methanoculleus marisnigri Romesser et al. 1981 type strain JR1.</title>
        <authorList>
            <person name="Anderson I.J."/>
            <person name="Sieprawska-Lupa M."/>
            <person name="Lapidus A."/>
            <person name="Nolan M."/>
            <person name="Copeland A."/>
            <person name="Glavina Del Rio T."/>
            <person name="Tice H."/>
            <person name="Dalin E."/>
            <person name="Barry K."/>
            <person name="Saunders E."/>
            <person name="Han C."/>
            <person name="Brettin T."/>
            <person name="Detter J.C."/>
            <person name="Bruce D."/>
            <person name="Mikhailova N."/>
            <person name="Pitluck S."/>
            <person name="Hauser L."/>
            <person name="Land M."/>
            <person name="Lucas S."/>
            <person name="Richardson P."/>
            <person name="Whitman W.B."/>
            <person name="Kyrpides N.C."/>
        </authorList>
    </citation>
    <scope>NUCLEOTIDE SEQUENCE [LARGE SCALE GENOMIC DNA]</scope>
    <source>
        <strain>ATCC 35101 / DSM 1498 / JR1</strain>
    </source>
</reference>
<keyword id="KW-0158">Chromosome</keyword>
<keyword id="KW-0963">Cytoplasm</keyword>
<keyword id="KW-0226">DNA condensation</keyword>
<keyword id="KW-0238">DNA-binding</keyword>
<sequence length="91" mass="9928">MIKDNTVFVGNKPVMNYVLAVVTQFNNGAEEVAIKARGKAISRAVDTAEIALNRFLANVDKKEIFTSTEMIDTDTGKTNVSSIEIVLTHAK</sequence>
<name>ALBA_METMJ</name>
<comment type="function">
    <text evidence="1">Binds double-stranded DNA tightly but without sequence specificity. Involved in DNA compaction.</text>
</comment>
<comment type="subcellular location">
    <subcellularLocation>
        <location evidence="1">Cytoplasm</location>
    </subcellularLocation>
    <subcellularLocation>
        <location evidence="1">Chromosome</location>
    </subcellularLocation>
</comment>
<comment type="similarity">
    <text evidence="1">Belongs to the histone-like Alba family.</text>
</comment>
<dbReference type="EMBL" id="CP000562">
    <property type="protein sequence ID" value="ABN57383.1"/>
    <property type="molecule type" value="Genomic_DNA"/>
</dbReference>
<dbReference type="RefSeq" id="WP_011844294.1">
    <property type="nucleotide sequence ID" value="NC_009051.1"/>
</dbReference>
<dbReference type="SMR" id="A3CVI3"/>
<dbReference type="STRING" id="368407.Memar_1454"/>
<dbReference type="GeneID" id="4847294"/>
<dbReference type="KEGG" id="mem:Memar_1454"/>
<dbReference type="eggNOG" id="arCOG01753">
    <property type="taxonomic scope" value="Archaea"/>
</dbReference>
<dbReference type="HOGENOM" id="CLU_110989_1_0_2"/>
<dbReference type="OrthoDB" id="10360at2157"/>
<dbReference type="Proteomes" id="UP000002146">
    <property type="component" value="Chromosome"/>
</dbReference>
<dbReference type="GO" id="GO:0005694">
    <property type="term" value="C:chromosome"/>
    <property type="evidence" value="ECO:0007669"/>
    <property type="project" value="UniProtKB-SubCell"/>
</dbReference>
<dbReference type="GO" id="GO:0005737">
    <property type="term" value="C:cytoplasm"/>
    <property type="evidence" value="ECO:0007669"/>
    <property type="project" value="UniProtKB-SubCell"/>
</dbReference>
<dbReference type="GO" id="GO:0003690">
    <property type="term" value="F:double-stranded DNA binding"/>
    <property type="evidence" value="ECO:0007669"/>
    <property type="project" value="UniProtKB-UniRule"/>
</dbReference>
<dbReference type="GO" id="GO:0003723">
    <property type="term" value="F:RNA binding"/>
    <property type="evidence" value="ECO:0007669"/>
    <property type="project" value="InterPro"/>
</dbReference>
<dbReference type="GO" id="GO:0030261">
    <property type="term" value="P:chromosome condensation"/>
    <property type="evidence" value="ECO:0007669"/>
    <property type="project" value="UniProtKB-KW"/>
</dbReference>
<dbReference type="Gene3D" id="3.30.110.20">
    <property type="entry name" value="Alba-like domain"/>
    <property type="match status" value="1"/>
</dbReference>
<dbReference type="HAMAP" id="MF_01122">
    <property type="entry name" value="AlbA"/>
    <property type="match status" value="1"/>
</dbReference>
<dbReference type="InterPro" id="IPR036882">
    <property type="entry name" value="Alba-like_dom_sf"/>
</dbReference>
<dbReference type="InterPro" id="IPR013795">
    <property type="entry name" value="DNA/RNA-bd_Alba"/>
</dbReference>
<dbReference type="InterPro" id="IPR002775">
    <property type="entry name" value="DNA/RNA-bd_Alba-like"/>
</dbReference>
<dbReference type="NCBIfam" id="TIGR00285">
    <property type="entry name" value="DNA-binding protein Alba"/>
    <property type="match status" value="1"/>
</dbReference>
<dbReference type="NCBIfam" id="NF003088">
    <property type="entry name" value="PRK04015.1"/>
    <property type="match status" value="1"/>
</dbReference>
<dbReference type="Pfam" id="PF01918">
    <property type="entry name" value="Alba"/>
    <property type="match status" value="1"/>
</dbReference>
<dbReference type="PIRSF" id="PIRSF028732">
    <property type="entry name" value="Alba"/>
    <property type="match status" value="1"/>
</dbReference>
<dbReference type="SUPFAM" id="SSF82704">
    <property type="entry name" value="AlbA-like"/>
    <property type="match status" value="1"/>
</dbReference>
<organism>
    <name type="scientific">Methanoculleus marisnigri (strain ATCC 35101 / DSM 1498 / JR1)</name>
    <dbReference type="NCBI Taxonomy" id="368407"/>
    <lineage>
        <taxon>Archaea</taxon>
        <taxon>Methanobacteriati</taxon>
        <taxon>Methanobacteriota</taxon>
        <taxon>Stenosarchaea group</taxon>
        <taxon>Methanomicrobia</taxon>
        <taxon>Methanomicrobiales</taxon>
        <taxon>Methanomicrobiaceae</taxon>
        <taxon>Methanoculleus</taxon>
    </lineage>
</organism>
<protein>
    <recommendedName>
        <fullName evidence="1">DNA/RNA-binding protein Alba</fullName>
    </recommendedName>
</protein>
<gene>
    <name evidence="1" type="primary">albA</name>
    <name type="ordered locus">Memar_1454</name>
</gene>
<evidence type="ECO:0000255" key="1">
    <source>
        <dbReference type="HAMAP-Rule" id="MF_01122"/>
    </source>
</evidence>
<proteinExistence type="inferred from homology"/>
<feature type="chain" id="PRO_1000073038" description="DNA/RNA-binding protein Alba">
    <location>
        <begin position="1"/>
        <end position="91"/>
    </location>
</feature>
<accession>A3CVI3</accession>